<protein>
    <recommendedName>
        <fullName evidence="1">Cell division inhibitor SulA</fullName>
    </recommendedName>
</protein>
<dbReference type="EMBL" id="CU928161">
    <property type="protein sequence ID" value="CAR02312.1"/>
    <property type="molecule type" value="Genomic_DNA"/>
</dbReference>
<dbReference type="RefSeq" id="WP_000287750.1">
    <property type="nucleotide sequence ID" value="NC_011742.1"/>
</dbReference>
<dbReference type="SMR" id="B7MIB2"/>
<dbReference type="KEGG" id="ecz:ECS88_0980"/>
<dbReference type="HOGENOM" id="CLU_118972_1_0_6"/>
<dbReference type="Proteomes" id="UP000000747">
    <property type="component" value="Chromosome"/>
</dbReference>
<dbReference type="GO" id="GO:0000917">
    <property type="term" value="P:division septum assembly"/>
    <property type="evidence" value="ECO:0007669"/>
    <property type="project" value="UniProtKB-KW"/>
</dbReference>
<dbReference type="GO" id="GO:0006281">
    <property type="term" value="P:DNA repair"/>
    <property type="evidence" value="ECO:0007669"/>
    <property type="project" value="TreeGrafter"/>
</dbReference>
<dbReference type="GO" id="GO:0051782">
    <property type="term" value="P:negative regulation of cell division"/>
    <property type="evidence" value="ECO:0007669"/>
    <property type="project" value="UniProtKB-UniRule"/>
</dbReference>
<dbReference type="GO" id="GO:0009432">
    <property type="term" value="P:SOS response"/>
    <property type="evidence" value="ECO:0007669"/>
    <property type="project" value="UniProtKB-UniRule"/>
</dbReference>
<dbReference type="FunFam" id="3.40.50.300:FF:000417">
    <property type="entry name" value="Cell division inhibitor SulA"/>
    <property type="match status" value="1"/>
</dbReference>
<dbReference type="Gene3D" id="3.40.50.300">
    <property type="entry name" value="P-loop containing nucleotide triphosphate hydrolases"/>
    <property type="match status" value="1"/>
</dbReference>
<dbReference type="HAMAP" id="MF_01179">
    <property type="entry name" value="SulA"/>
    <property type="match status" value="1"/>
</dbReference>
<dbReference type="InterPro" id="IPR004596">
    <property type="entry name" value="Cell_div_suppressor_SulA"/>
</dbReference>
<dbReference type="InterPro" id="IPR027417">
    <property type="entry name" value="P-loop_NTPase"/>
</dbReference>
<dbReference type="InterPro" id="IPR050356">
    <property type="entry name" value="SulA_CellDiv_inhibitor"/>
</dbReference>
<dbReference type="InterPro" id="IPR047696">
    <property type="entry name" value="SulA_enterobact"/>
</dbReference>
<dbReference type="NCBIfam" id="NF007892">
    <property type="entry name" value="PRK10595.1"/>
    <property type="match status" value="1"/>
</dbReference>
<dbReference type="NCBIfam" id="TIGR00623">
    <property type="entry name" value="SOS_SulA_coli"/>
    <property type="match status" value="1"/>
</dbReference>
<dbReference type="PANTHER" id="PTHR35369">
    <property type="entry name" value="BLR3025 PROTEIN-RELATED"/>
    <property type="match status" value="1"/>
</dbReference>
<dbReference type="PANTHER" id="PTHR35369:SF4">
    <property type="entry name" value="CELL DIVISION INHIBITOR SULA"/>
    <property type="match status" value="1"/>
</dbReference>
<dbReference type="Pfam" id="PF03846">
    <property type="entry name" value="SulA"/>
    <property type="match status" value="1"/>
</dbReference>
<dbReference type="PIRSF" id="PIRSF003093">
    <property type="entry name" value="SulA"/>
    <property type="match status" value="1"/>
</dbReference>
<dbReference type="SUPFAM" id="SSF52540">
    <property type="entry name" value="P-loop containing nucleoside triphosphate hydrolases"/>
    <property type="match status" value="1"/>
</dbReference>
<evidence type="ECO:0000255" key="1">
    <source>
        <dbReference type="HAMAP-Rule" id="MF_01179"/>
    </source>
</evidence>
<comment type="function">
    <text evidence="1">Component of the SOS system and an inhibitor of cell division. Accumulation of SulA causes rapid cessation of cell division and the appearance of long, non-septate filaments. In the presence of GTP, binds a polymerization-competent form of FtsZ in a 1:1 ratio, thus inhibiting FtsZ polymerization and therefore preventing it from participating in the assembly of the Z ring. This mechanism prevents the premature segregation of damaged DNA to daughter cells during cell division.</text>
</comment>
<comment type="subunit">
    <text evidence="1">Interacts with FtsZ.</text>
</comment>
<comment type="induction">
    <text evidence="1">By DNA damage, as part of the SOS response.</text>
</comment>
<comment type="PTM">
    <text evidence="1">Is rapidly cleaved and degraded by the Lon protease once DNA damage is repaired.</text>
</comment>
<comment type="similarity">
    <text evidence="1">Belongs to the SulA family.</text>
</comment>
<name>SULA_ECO45</name>
<proteinExistence type="inferred from homology"/>
<reference key="1">
    <citation type="journal article" date="2009" name="PLoS Genet.">
        <title>Organised genome dynamics in the Escherichia coli species results in highly diverse adaptive paths.</title>
        <authorList>
            <person name="Touchon M."/>
            <person name="Hoede C."/>
            <person name="Tenaillon O."/>
            <person name="Barbe V."/>
            <person name="Baeriswyl S."/>
            <person name="Bidet P."/>
            <person name="Bingen E."/>
            <person name="Bonacorsi S."/>
            <person name="Bouchier C."/>
            <person name="Bouvet O."/>
            <person name="Calteau A."/>
            <person name="Chiapello H."/>
            <person name="Clermont O."/>
            <person name="Cruveiller S."/>
            <person name="Danchin A."/>
            <person name="Diard M."/>
            <person name="Dossat C."/>
            <person name="Karoui M.E."/>
            <person name="Frapy E."/>
            <person name="Garry L."/>
            <person name="Ghigo J.M."/>
            <person name="Gilles A.M."/>
            <person name="Johnson J."/>
            <person name="Le Bouguenec C."/>
            <person name="Lescat M."/>
            <person name="Mangenot S."/>
            <person name="Martinez-Jehanne V."/>
            <person name="Matic I."/>
            <person name="Nassif X."/>
            <person name="Oztas S."/>
            <person name="Petit M.A."/>
            <person name="Pichon C."/>
            <person name="Rouy Z."/>
            <person name="Ruf C.S."/>
            <person name="Schneider D."/>
            <person name="Tourret J."/>
            <person name="Vacherie B."/>
            <person name="Vallenet D."/>
            <person name="Medigue C."/>
            <person name="Rocha E.P.C."/>
            <person name="Denamur E."/>
        </authorList>
    </citation>
    <scope>NUCLEOTIDE SEQUENCE [LARGE SCALE GENOMIC DNA]</scope>
    <source>
        <strain>S88 / ExPEC</strain>
    </source>
</reference>
<gene>
    <name evidence="1" type="primary">sulA</name>
    <name type="ordered locus">ECS88_0980</name>
</gene>
<sequence>MYTAGYAHRDSSFSSTASKIARVSTENTTAGLISEVVYREDQPMMTQLLLLPLLQQLGQQSRWQLWLTPQQKLSREWVQASGLPLTKVMQISQLSPCHTVESMVRALRTGNYSVVIGWLADDLTEEEHAELVDAANEGNAMGFIMRPVSASSHATRQLSGLKIHSNLYH</sequence>
<accession>B7MIB2</accession>
<keyword id="KW-0131">Cell cycle</keyword>
<keyword id="KW-0132">Cell division</keyword>
<keyword id="KW-0227">DNA damage</keyword>
<keyword id="KW-1185">Reference proteome</keyword>
<keyword id="KW-0717">Septation</keyword>
<keyword id="KW-0742">SOS response</keyword>
<feature type="chain" id="PRO_1000138155" description="Cell division inhibitor SulA">
    <location>
        <begin position="1"/>
        <end position="169"/>
    </location>
</feature>
<feature type="region of interest" description="FtsZ binding" evidence="1">
    <location>
        <begin position="106"/>
        <end position="112"/>
    </location>
</feature>
<feature type="region of interest" description="Lon protease binding" evidence="1">
    <location>
        <begin position="162"/>
        <end position="169"/>
    </location>
</feature>
<feature type="site" description="Essential for degradation by Lon protease" evidence="1">
    <location>
        <position position="169"/>
    </location>
</feature>
<organism>
    <name type="scientific">Escherichia coli O45:K1 (strain S88 / ExPEC)</name>
    <dbReference type="NCBI Taxonomy" id="585035"/>
    <lineage>
        <taxon>Bacteria</taxon>
        <taxon>Pseudomonadati</taxon>
        <taxon>Pseudomonadota</taxon>
        <taxon>Gammaproteobacteria</taxon>
        <taxon>Enterobacterales</taxon>
        <taxon>Enterobacteriaceae</taxon>
        <taxon>Escherichia</taxon>
    </lineage>
</organism>